<sequence length="273" mass="30126">MSLTNTKTGFSVKDILDLPDTNDEDGSVAEGPEEESEGPEPAKRAGPLGQGALDAVQSLPLKSPFYDSSDNPYTRWLASTEGLQYSLHGLAASAPPQDSSSKSPEPSADESPDNDKETQGGGGDAGKKRKRRVLFSKAQTYELERRFRQQRYLSAPEREHLASLIRLTPTQVKIWFQNHRYKMKRARAEKGMEVTPLPSPRRVAVPVLVRDGKPCHALKAQDLAAATFQAGIPFSAYSAQSLQHMQYNAQYSSASTPQYPTAHPLVQAQQWTW</sequence>
<accession>P42586</accession>
<organism>
    <name type="scientific">Mus musculus</name>
    <name type="common">Mouse</name>
    <dbReference type="NCBI Taxonomy" id="10090"/>
    <lineage>
        <taxon>Eukaryota</taxon>
        <taxon>Metazoa</taxon>
        <taxon>Chordata</taxon>
        <taxon>Craniata</taxon>
        <taxon>Vertebrata</taxon>
        <taxon>Euteleostomi</taxon>
        <taxon>Mammalia</taxon>
        <taxon>Eutheria</taxon>
        <taxon>Euarchontoglires</taxon>
        <taxon>Glires</taxon>
        <taxon>Rodentia</taxon>
        <taxon>Myomorpha</taxon>
        <taxon>Muroidea</taxon>
        <taxon>Muridae</taxon>
        <taxon>Murinae</taxon>
        <taxon>Mus</taxon>
        <taxon>Mus</taxon>
    </lineage>
</organism>
<feature type="chain" id="PRO_0000048931" description="Homeobox protein Nkx-2.2">
    <location>
        <begin position="1"/>
        <end position="273"/>
    </location>
</feature>
<feature type="DNA-binding region" description="Homeobox" evidence="1">
    <location>
        <begin position="128"/>
        <end position="187"/>
    </location>
</feature>
<feature type="region of interest" description="Disordered" evidence="2">
    <location>
        <begin position="1"/>
        <end position="56"/>
    </location>
</feature>
<feature type="region of interest" description="Disordered" evidence="2">
    <location>
        <begin position="91"/>
        <end position="131"/>
    </location>
</feature>
<feature type="compositionally biased region" description="Acidic residues" evidence="2">
    <location>
        <begin position="20"/>
        <end position="38"/>
    </location>
</feature>
<feature type="mutagenesis site" description="Inhibits DNA-binding activity and transcriptional activation of NEUROD1 expression." evidence="5">
    <original>K</original>
    <variation>I</variation>
    <location>
        <position position="184"/>
    </location>
</feature>
<comment type="function">
    <text evidence="3 5">Transcriptional activator involved in the development of insulin-producting beta cells in the endocrine pancreas (PubMed:11076772). May also be involved in specifying diencephalic neuromeric boundaries, and in controlling the expression of genes that play a role in axonal guidance. Binds to elements within the NEUROD1 promoter (PubMed:19759004).</text>
</comment>
<comment type="subunit">
    <text evidence="4">Interacts with OLIG2.</text>
</comment>
<comment type="subcellular location">
    <subcellularLocation>
        <location evidence="1 4">Nucleus</location>
    </subcellularLocation>
</comment>
<comment type="tissue specificity">
    <text>Expressed in restricted areas of the developing CNS: the hindbrain and forebrain, and pancreas.</text>
</comment>
<comment type="developmental stage">
    <text>Expressed during embryogenesis.</text>
</comment>
<comment type="domain">
    <text>The homeodomain is essential for interaction with OLIG2.</text>
</comment>
<comment type="disruption phenotype">
    <text evidence="3">Mutant embryos do not form any insulin-expressing cells in the pancreas throughout development, and instead accumulate incompletely differentiated beta cells (PubMed:11076772). Simultaneous knockout of NKX6-1 and NKX2-2 is not distinguable from the single NKX2-2 knockout (PubMed:11076772).</text>
</comment>
<comment type="similarity">
    <text evidence="6">Belongs to the NK-2 homeobox family.</text>
</comment>
<protein>
    <recommendedName>
        <fullName>Homeobox protein Nkx-2.2</fullName>
    </recommendedName>
    <alternativeName>
        <fullName>Homeobox protein NK-2 homolog B</fullName>
    </alternativeName>
</protein>
<dbReference type="EMBL" id="U31566">
    <property type="protein sequence ID" value="AAA79303.1"/>
    <property type="molecule type" value="mRNA"/>
</dbReference>
<dbReference type="EMBL" id="S83259">
    <property type="status" value="NOT_ANNOTATED_CDS"/>
    <property type="molecule type" value="Genomic_DNA"/>
</dbReference>
<dbReference type="CCDS" id="CCDS16834.1"/>
<dbReference type="PIR" id="JC4634">
    <property type="entry name" value="JC4634"/>
</dbReference>
<dbReference type="RefSeq" id="NP_035049.1">
    <property type="nucleotide sequence ID" value="NM_010919.3"/>
</dbReference>
<dbReference type="RefSeq" id="XP_006498961.1">
    <property type="nucleotide sequence ID" value="XM_006498898.2"/>
</dbReference>
<dbReference type="RefSeq" id="XP_006498962.1">
    <property type="nucleotide sequence ID" value="XM_006498899.4"/>
</dbReference>
<dbReference type="RefSeq" id="XP_006498963.1">
    <property type="nucleotide sequence ID" value="XM_006498900.5"/>
</dbReference>
<dbReference type="RefSeq" id="XP_011237651.1">
    <property type="nucleotide sequence ID" value="XM_011239349.4"/>
</dbReference>
<dbReference type="RefSeq" id="XP_036015218.1">
    <property type="nucleotide sequence ID" value="XM_036159325.1"/>
</dbReference>
<dbReference type="SMR" id="P42586"/>
<dbReference type="BioGRID" id="201776">
    <property type="interactions" value="4"/>
</dbReference>
<dbReference type="FunCoup" id="P42586">
    <property type="interactions" value="1315"/>
</dbReference>
<dbReference type="IntAct" id="P42586">
    <property type="interactions" value="1"/>
</dbReference>
<dbReference type="STRING" id="10090.ENSMUSP00000069666"/>
<dbReference type="iPTMnet" id="P42586"/>
<dbReference type="PhosphoSitePlus" id="P42586"/>
<dbReference type="PaxDb" id="10090-ENSMUSP00000069666"/>
<dbReference type="PeptideAtlas" id="P42586"/>
<dbReference type="ProteomicsDB" id="252901"/>
<dbReference type="Antibodypedia" id="908">
    <property type="antibodies" value="918 antibodies from 36 providers"/>
</dbReference>
<dbReference type="DNASU" id="18088"/>
<dbReference type="Ensembl" id="ENSMUST00000067075.7">
    <property type="protein sequence ID" value="ENSMUSP00000069666.6"/>
    <property type="gene ID" value="ENSMUSG00000027434.12"/>
</dbReference>
<dbReference type="GeneID" id="18088"/>
<dbReference type="KEGG" id="mmu:18088"/>
<dbReference type="UCSC" id="uc008msu.1">
    <property type="organism name" value="mouse"/>
</dbReference>
<dbReference type="AGR" id="MGI:97347"/>
<dbReference type="CTD" id="4821"/>
<dbReference type="MGI" id="MGI:97347">
    <property type="gene designation" value="Nkx2-2"/>
</dbReference>
<dbReference type="VEuPathDB" id="HostDB:ENSMUSG00000027434"/>
<dbReference type="eggNOG" id="KOG0842">
    <property type="taxonomic scope" value="Eukaryota"/>
</dbReference>
<dbReference type="GeneTree" id="ENSGT00940000159727"/>
<dbReference type="HOGENOM" id="CLU_049543_0_2_1"/>
<dbReference type="InParanoid" id="P42586"/>
<dbReference type="OrthoDB" id="6159439at2759"/>
<dbReference type="PhylomeDB" id="P42586"/>
<dbReference type="TreeFam" id="TF351204"/>
<dbReference type="BioGRID-ORCS" id="18088">
    <property type="hits" value="2 hits in 79 CRISPR screens"/>
</dbReference>
<dbReference type="PRO" id="PR:P42586"/>
<dbReference type="Proteomes" id="UP000000589">
    <property type="component" value="Chromosome 2"/>
</dbReference>
<dbReference type="RNAct" id="P42586">
    <property type="molecule type" value="protein"/>
</dbReference>
<dbReference type="Bgee" id="ENSMUSG00000027434">
    <property type="expression patterns" value="Expressed in islet of Langerhans and 90 other cell types or tissues"/>
</dbReference>
<dbReference type="ExpressionAtlas" id="P42586">
    <property type="expression patterns" value="baseline and differential"/>
</dbReference>
<dbReference type="GO" id="GO:0005634">
    <property type="term" value="C:nucleus"/>
    <property type="evidence" value="ECO:0000314"/>
    <property type="project" value="MGI"/>
</dbReference>
<dbReference type="GO" id="GO:0000987">
    <property type="term" value="F:cis-regulatory region sequence-specific DNA binding"/>
    <property type="evidence" value="ECO:0000314"/>
    <property type="project" value="UniProtKB"/>
</dbReference>
<dbReference type="GO" id="GO:0001228">
    <property type="term" value="F:DNA-binding transcription activator activity, RNA polymerase II-specific"/>
    <property type="evidence" value="ECO:0000314"/>
    <property type="project" value="GO_Central"/>
</dbReference>
<dbReference type="GO" id="GO:0003700">
    <property type="term" value="F:DNA-binding transcription factor activity"/>
    <property type="evidence" value="ECO:0000314"/>
    <property type="project" value="MGI"/>
</dbReference>
<dbReference type="GO" id="GO:0043565">
    <property type="term" value="F:sequence-specific DNA binding"/>
    <property type="evidence" value="ECO:0000314"/>
    <property type="project" value="MGI"/>
</dbReference>
<dbReference type="GO" id="GO:0048708">
    <property type="term" value="P:astrocyte differentiation"/>
    <property type="evidence" value="ECO:0000315"/>
    <property type="project" value="MGI"/>
</dbReference>
<dbReference type="GO" id="GO:0048468">
    <property type="term" value="P:cell development"/>
    <property type="evidence" value="ECO:0000315"/>
    <property type="project" value="MGI"/>
</dbReference>
<dbReference type="GO" id="GO:0030154">
    <property type="term" value="P:cell differentiation"/>
    <property type="evidence" value="ECO:0000315"/>
    <property type="project" value="MGI"/>
</dbReference>
<dbReference type="GO" id="GO:0021953">
    <property type="term" value="P:central nervous system neuron differentiation"/>
    <property type="evidence" value="ECO:0000314"/>
    <property type="project" value="MGI"/>
</dbReference>
<dbReference type="GO" id="GO:0048565">
    <property type="term" value="P:digestive tract development"/>
    <property type="evidence" value="ECO:0000315"/>
    <property type="project" value="MGI"/>
</dbReference>
<dbReference type="GO" id="GO:0031018">
    <property type="term" value="P:endocrine pancreas development"/>
    <property type="evidence" value="ECO:0000315"/>
    <property type="project" value="MGI"/>
</dbReference>
<dbReference type="GO" id="GO:0045665">
    <property type="term" value="P:negative regulation of neuron differentiation"/>
    <property type="evidence" value="ECO:0000314"/>
    <property type="project" value="MGI"/>
</dbReference>
<dbReference type="GO" id="GO:0007399">
    <property type="term" value="P:nervous system development"/>
    <property type="evidence" value="ECO:0000314"/>
    <property type="project" value="MGI"/>
</dbReference>
<dbReference type="GO" id="GO:0061101">
    <property type="term" value="P:neuroendocrine cell differentiation"/>
    <property type="evidence" value="ECO:0000315"/>
    <property type="project" value="MGI"/>
</dbReference>
<dbReference type="GO" id="GO:0030182">
    <property type="term" value="P:neuron differentiation"/>
    <property type="evidence" value="ECO:0000314"/>
    <property type="project" value="MGI"/>
</dbReference>
<dbReference type="GO" id="GO:0048665">
    <property type="term" value="P:neuron fate specification"/>
    <property type="evidence" value="ECO:0000315"/>
    <property type="project" value="MGI"/>
</dbReference>
<dbReference type="GO" id="GO:0014003">
    <property type="term" value="P:oligodendrocyte development"/>
    <property type="evidence" value="ECO:0000315"/>
    <property type="project" value="MGI"/>
</dbReference>
<dbReference type="GO" id="GO:0048709">
    <property type="term" value="P:oligodendrocyte differentiation"/>
    <property type="evidence" value="ECO:0000316"/>
    <property type="project" value="MGI"/>
</dbReference>
<dbReference type="GO" id="GO:0021554">
    <property type="term" value="P:optic nerve development"/>
    <property type="evidence" value="ECO:0007669"/>
    <property type="project" value="Ensembl"/>
</dbReference>
<dbReference type="GO" id="GO:0003326">
    <property type="term" value="P:pancreatic A cell fate commitment"/>
    <property type="evidence" value="ECO:0000315"/>
    <property type="project" value="MGI"/>
</dbReference>
<dbReference type="GO" id="GO:0003329">
    <property type="term" value="P:pancreatic PP cell fate commitment"/>
    <property type="evidence" value="ECO:0000316"/>
    <property type="project" value="MGI"/>
</dbReference>
<dbReference type="GO" id="GO:0030858">
    <property type="term" value="P:positive regulation of epithelial cell differentiation"/>
    <property type="evidence" value="ECO:0000315"/>
    <property type="project" value="MGI"/>
</dbReference>
<dbReference type="GO" id="GO:0010628">
    <property type="term" value="P:positive regulation of gene expression"/>
    <property type="evidence" value="ECO:0000314"/>
    <property type="project" value="MGI"/>
</dbReference>
<dbReference type="GO" id="GO:0045666">
    <property type="term" value="P:positive regulation of neuron differentiation"/>
    <property type="evidence" value="ECO:0000314"/>
    <property type="project" value="MGI"/>
</dbReference>
<dbReference type="GO" id="GO:0048714">
    <property type="term" value="P:positive regulation of oligodendrocyte differentiation"/>
    <property type="evidence" value="ECO:0000316"/>
    <property type="project" value="MGI"/>
</dbReference>
<dbReference type="GO" id="GO:0045944">
    <property type="term" value="P:positive regulation of transcription by RNA polymerase II"/>
    <property type="evidence" value="ECO:0000314"/>
    <property type="project" value="MGI"/>
</dbReference>
<dbReference type="GO" id="GO:0006355">
    <property type="term" value="P:regulation of DNA-templated transcription"/>
    <property type="evidence" value="ECO:0000314"/>
    <property type="project" value="MGI"/>
</dbReference>
<dbReference type="GO" id="GO:0009749">
    <property type="term" value="P:response to glucose"/>
    <property type="evidence" value="ECO:0007669"/>
    <property type="project" value="Ensembl"/>
</dbReference>
<dbReference type="GO" id="GO:0032570">
    <property type="term" value="P:response to progesterone"/>
    <property type="evidence" value="ECO:0007669"/>
    <property type="project" value="Ensembl"/>
</dbReference>
<dbReference type="GO" id="GO:0007224">
    <property type="term" value="P:smoothened signaling pathway"/>
    <property type="evidence" value="ECO:0000314"/>
    <property type="project" value="MGI"/>
</dbReference>
<dbReference type="GO" id="GO:0021522">
    <property type="term" value="P:spinal cord motor neuron differentiation"/>
    <property type="evidence" value="ECO:0000315"/>
    <property type="project" value="MGI"/>
</dbReference>
<dbReference type="GO" id="GO:0021529">
    <property type="term" value="P:spinal cord oligodendrocyte cell differentiation"/>
    <property type="evidence" value="ECO:0000315"/>
    <property type="project" value="MGI"/>
</dbReference>
<dbReference type="GO" id="GO:0021530">
    <property type="term" value="P:spinal cord oligodendrocyte cell fate specification"/>
    <property type="evidence" value="ECO:0000314"/>
    <property type="project" value="MGI"/>
</dbReference>
<dbReference type="GO" id="GO:0003323">
    <property type="term" value="P:type B pancreatic cell development"/>
    <property type="evidence" value="ECO:0000314"/>
    <property type="project" value="MGI"/>
</dbReference>
<dbReference type="GO" id="GO:0003309">
    <property type="term" value="P:type B pancreatic cell differentiation"/>
    <property type="evidence" value="ECO:0000315"/>
    <property type="project" value="MGI"/>
</dbReference>
<dbReference type="GO" id="GO:0003327">
    <property type="term" value="P:type B pancreatic cell fate commitment"/>
    <property type="evidence" value="ECO:0000315"/>
    <property type="project" value="MGI"/>
</dbReference>
<dbReference type="GO" id="GO:0060580">
    <property type="term" value="P:ventral spinal cord interneuron fate determination"/>
    <property type="evidence" value="ECO:0000315"/>
    <property type="project" value="MGI"/>
</dbReference>
<dbReference type="CDD" id="cd00086">
    <property type="entry name" value="homeodomain"/>
    <property type="match status" value="1"/>
</dbReference>
<dbReference type="FunFam" id="1.10.10.60:FF:000101">
    <property type="entry name" value="NK2 homeobox 8"/>
    <property type="match status" value="1"/>
</dbReference>
<dbReference type="Gene3D" id="1.10.10.60">
    <property type="entry name" value="Homeodomain-like"/>
    <property type="match status" value="1"/>
</dbReference>
<dbReference type="InterPro" id="IPR001356">
    <property type="entry name" value="HD"/>
</dbReference>
<dbReference type="InterPro" id="IPR020479">
    <property type="entry name" value="HD_metazoa"/>
</dbReference>
<dbReference type="InterPro" id="IPR017970">
    <property type="entry name" value="Homeobox_CS"/>
</dbReference>
<dbReference type="InterPro" id="IPR050394">
    <property type="entry name" value="Homeobox_NK-like"/>
</dbReference>
<dbReference type="InterPro" id="IPR009057">
    <property type="entry name" value="Homeodomain-like_sf"/>
</dbReference>
<dbReference type="PANTHER" id="PTHR24340">
    <property type="entry name" value="HOMEOBOX PROTEIN NKX"/>
    <property type="match status" value="1"/>
</dbReference>
<dbReference type="PANTHER" id="PTHR24340:SF24">
    <property type="entry name" value="HOMEOBOX PROTEIN NKX-2.2"/>
    <property type="match status" value="1"/>
</dbReference>
<dbReference type="Pfam" id="PF00046">
    <property type="entry name" value="Homeodomain"/>
    <property type="match status" value="1"/>
</dbReference>
<dbReference type="PRINTS" id="PR00024">
    <property type="entry name" value="HOMEOBOX"/>
</dbReference>
<dbReference type="SMART" id="SM00389">
    <property type="entry name" value="HOX"/>
    <property type="match status" value="1"/>
</dbReference>
<dbReference type="SUPFAM" id="SSF46689">
    <property type="entry name" value="Homeodomain-like"/>
    <property type="match status" value="1"/>
</dbReference>
<dbReference type="PROSITE" id="PS00027">
    <property type="entry name" value="HOMEOBOX_1"/>
    <property type="match status" value="1"/>
</dbReference>
<dbReference type="PROSITE" id="PS50071">
    <property type="entry name" value="HOMEOBOX_2"/>
    <property type="match status" value="1"/>
</dbReference>
<reference key="1">
    <citation type="journal article" date="1994" name="Science">
        <title>The embryonic vertebrate forebrain: the prosomeric model.</title>
        <authorList>
            <person name="Rubenstein J.L."/>
            <person name="Martinez S."/>
            <person name="Shimamura K."/>
            <person name="Puelles L."/>
        </authorList>
    </citation>
    <scope>NUCLEOTIDE SEQUENCE [MRNA]</scope>
</reference>
<reference key="2">
    <citation type="journal article" date="1996" name="Gene">
        <title>The cDNA sequence of murine Nkx-2.2.</title>
        <authorList>
            <person name="Hartigan D.J."/>
            <person name="Rubenstein J.L."/>
        </authorList>
    </citation>
    <scope>NUCLEOTIDE SEQUENCE [MRNA]</scope>
</reference>
<reference key="3">
    <citation type="journal article" date="1992" name="Neuron">
        <title>Regional expression of the homeobox gene Nkx-2.2 in the developing mammalian forebrain.</title>
        <authorList>
            <person name="Price M."/>
            <person name="Lazzaro D."/>
            <person name="Pohl T."/>
            <person name="Mattei M.-G."/>
            <person name="Ruether U."/>
            <person name="Olivo J.-C."/>
            <person name="Duboule D."/>
            <person name="di Lauro R."/>
        </authorList>
    </citation>
    <scope>NUCLEOTIDE SEQUENCE [GENOMIC DNA] OF 112-196</scope>
</reference>
<reference key="4">
    <citation type="journal article" date="2000" name="Development">
        <title>Homeobox gene Nkx6.1 lies downstream of Nkx2.2 in the major pathway of beta-cell formation in the pancreas.</title>
        <authorList>
            <person name="Sander M."/>
            <person name="Sussel L."/>
            <person name="Conners J."/>
            <person name="Scheel D."/>
            <person name="Kalamaras J."/>
            <person name="Dela Cruz F."/>
            <person name="Schwitzgebel V."/>
            <person name="Hayes-Jordan A."/>
            <person name="German M."/>
        </authorList>
    </citation>
    <scope>FUNCTION</scope>
    <scope>DISRUPTION PHENOTYPE</scope>
</reference>
<reference key="5">
    <citation type="journal article" date="2003" name="J. Neurosci.">
        <title>Cross-repressive interaction of the Olig2 and Nkx2.2 transcription factors in developing neural tube associated with formation of a specific physical complex.</title>
        <authorList>
            <person name="Sun T."/>
            <person name="Dong H."/>
            <person name="Wu L."/>
            <person name="Kane M."/>
            <person name="Rowitch D.H."/>
            <person name="Stiles C.D."/>
        </authorList>
    </citation>
    <scope>INTERACTION WITH OLIG2</scope>
    <scope>SUBCELLULAR LOCATION</scope>
</reference>
<reference key="6">
    <citation type="journal article" date="2009" name="J. Biol. Chem.">
        <title>Cooperative transcriptional regulation of the essential pancreatic islet gene NeuroD1 (beta2) by Nkx2.2 and neurogenin 3.</title>
        <authorList>
            <person name="Anderson K.R."/>
            <person name="Torres C.A."/>
            <person name="Solomon K."/>
            <person name="Becker T.C."/>
            <person name="Newgard C.B."/>
            <person name="Wright C.V."/>
            <person name="Hagman J."/>
            <person name="Sussel L."/>
        </authorList>
    </citation>
    <scope>FUNCTION</scope>
    <scope>ASSOCIATION WITH CHROMATIN</scope>
    <scope>DNA-BINDING</scope>
    <scope>MUTAGENESIS OF LYS-184</scope>
</reference>
<proteinExistence type="evidence at protein level"/>
<evidence type="ECO:0000255" key="1">
    <source>
        <dbReference type="PROSITE-ProRule" id="PRU00108"/>
    </source>
</evidence>
<evidence type="ECO:0000256" key="2">
    <source>
        <dbReference type="SAM" id="MobiDB-lite"/>
    </source>
</evidence>
<evidence type="ECO:0000269" key="3">
    <source>
    </source>
</evidence>
<evidence type="ECO:0000269" key="4">
    <source>
    </source>
</evidence>
<evidence type="ECO:0000269" key="5">
    <source>
    </source>
</evidence>
<evidence type="ECO:0000305" key="6"/>
<name>NKX22_MOUSE</name>
<gene>
    <name type="primary">Nkx2-2</name>
    <name type="synonym">Nkx-2.2</name>
    <name type="synonym">Nkx2b</name>
</gene>
<keyword id="KW-0010">Activator</keyword>
<keyword id="KW-0217">Developmental protein</keyword>
<keyword id="KW-0238">DNA-binding</keyword>
<keyword id="KW-0371">Homeobox</keyword>
<keyword id="KW-0539">Nucleus</keyword>
<keyword id="KW-1185">Reference proteome</keyword>
<keyword id="KW-0804">Transcription</keyword>
<keyword id="KW-0805">Transcription regulation</keyword>